<protein>
    <recommendedName>
        <fullName evidence="1">Phospho-N-acetylmuramoyl-pentapeptide-transferase</fullName>
        <ecNumber evidence="1">2.7.8.13</ecNumber>
    </recommendedName>
    <alternativeName>
        <fullName evidence="1">UDP-MurNAc-pentapeptide phosphotransferase</fullName>
    </alternativeName>
</protein>
<evidence type="ECO:0000255" key="1">
    <source>
        <dbReference type="HAMAP-Rule" id="MF_00038"/>
    </source>
</evidence>
<comment type="function">
    <text evidence="1">Catalyzes the initial step of the lipid cycle reactions in the biosynthesis of the cell wall peptidoglycan: transfers peptidoglycan precursor phospho-MurNAc-pentapeptide from UDP-MurNAc-pentapeptide onto the lipid carrier undecaprenyl phosphate, yielding undecaprenyl-pyrophosphoryl-MurNAc-pentapeptide, known as lipid I.</text>
</comment>
<comment type="catalytic activity">
    <reaction evidence="1">
        <text>UDP-N-acetyl-alpha-D-muramoyl-L-alanyl-gamma-D-glutamyl-meso-2,6-diaminopimeloyl-D-alanyl-D-alanine + di-trans,octa-cis-undecaprenyl phosphate = di-trans,octa-cis-undecaprenyl diphospho-N-acetyl-alpha-D-muramoyl-L-alanyl-D-glutamyl-meso-2,6-diaminopimeloyl-D-alanyl-D-alanine + UMP</text>
        <dbReference type="Rhea" id="RHEA:28386"/>
        <dbReference type="ChEBI" id="CHEBI:57865"/>
        <dbReference type="ChEBI" id="CHEBI:60392"/>
        <dbReference type="ChEBI" id="CHEBI:61386"/>
        <dbReference type="ChEBI" id="CHEBI:61387"/>
        <dbReference type="EC" id="2.7.8.13"/>
    </reaction>
</comment>
<comment type="cofactor">
    <cofactor evidence="1">
        <name>Mg(2+)</name>
        <dbReference type="ChEBI" id="CHEBI:18420"/>
    </cofactor>
</comment>
<comment type="pathway">
    <text evidence="1">Cell wall biogenesis; peptidoglycan biosynthesis.</text>
</comment>
<comment type="subcellular location">
    <subcellularLocation>
        <location evidence="1">Cell inner membrane</location>
        <topology evidence="1">Multi-pass membrane protein</topology>
    </subcellularLocation>
</comment>
<comment type="similarity">
    <text evidence="1">Belongs to the glycosyltransferase 4 family. MraY subfamily.</text>
</comment>
<name>MRAY_FUSNN</name>
<keyword id="KW-0131">Cell cycle</keyword>
<keyword id="KW-0132">Cell division</keyword>
<keyword id="KW-0997">Cell inner membrane</keyword>
<keyword id="KW-1003">Cell membrane</keyword>
<keyword id="KW-0133">Cell shape</keyword>
<keyword id="KW-0961">Cell wall biogenesis/degradation</keyword>
<keyword id="KW-0460">Magnesium</keyword>
<keyword id="KW-0472">Membrane</keyword>
<keyword id="KW-0479">Metal-binding</keyword>
<keyword id="KW-0573">Peptidoglycan synthesis</keyword>
<keyword id="KW-1185">Reference proteome</keyword>
<keyword id="KW-0808">Transferase</keyword>
<keyword id="KW-0812">Transmembrane</keyword>
<keyword id="KW-1133">Transmembrane helix</keyword>
<sequence>MLYFLAEHLAKLEFLKSIYLRAFLGFVISFCIVLFAGRPFIKYLKIKKFGEEIRDDGPSSHFSKKGTPTMGGVLIIAAVLLTSIFINDLTNSLILLVLLSTIMFAAIGFIDDYRKFTVSKKGLAGKKKLLFQGAIGLIIWAYIYFIGLTGRPMVDLSLINPISAYPYYIGAIGLFFLIQIVLMGTSNAVNITDGLDGLAIMPMIICSTILGVIAYFTGHTELSSHLHLFYTVGSGELSVFLSAVTGAGLGFLWYNCYPAQIFMGDTGSLTLGGILGVIAIILKQELMLPIMGFIFVLEALSVILQVGSFKLRGKRIFKMAPIHHHFELMGIPESKVTMRFWIGTLIFGIIALGAIKMRGIL</sequence>
<reference key="1">
    <citation type="journal article" date="2002" name="J. Bacteriol.">
        <title>Genome sequence and analysis of the oral bacterium Fusobacterium nucleatum strain ATCC 25586.</title>
        <authorList>
            <person name="Kapatral V."/>
            <person name="Anderson I."/>
            <person name="Ivanova N."/>
            <person name="Reznik G."/>
            <person name="Los T."/>
            <person name="Lykidis A."/>
            <person name="Bhattacharyya A."/>
            <person name="Bartman A."/>
            <person name="Gardner W."/>
            <person name="Grechkin G."/>
            <person name="Zhu L."/>
            <person name="Vasieva O."/>
            <person name="Chu L."/>
            <person name="Kogan Y."/>
            <person name="Chaga O."/>
            <person name="Goltsman E."/>
            <person name="Bernal A."/>
            <person name="Larsen N."/>
            <person name="D'Souza M."/>
            <person name="Walunas T."/>
            <person name="Pusch G."/>
            <person name="Haselkorn R."/>
            <person name="Fonstein M."/>
            <person name="Kyrpides N.C."/>
            <person name="Overbeek R."/>
        </authorList>
    </citation>
    <scope>NUCLEOTIDE SEQUENCE [LARGE SCALE GENOMIC DNA]</scope>
    <source>
        <strain>ATCC 25586 / DSM 15643 / BCRC 10681 / CIP 101130 / JCM 8532 / KCTC 2640 / LMG 13131 / VPI 4355</strain>
    </source>
</reference>
<organism>
    <name type="scientific">Fusobacterium nucleatum subsp. nucleatum (strain ATCC 25586 / DSM 15643 / BCRC 10681 / CIP 101130 / JCM 8532 / KCTC 2640 / LMG 13131 / VPI 4355)</name>
    <dbReference type="NCBI Taxonomy" id="190304"/>
    <lineage>
        <taxon>Bacteria</taxon>
        <taxon>Fusobacteriati</taxon>
        <taxon>Fusobacteriota</taxon>
        <taxon>Fusobacteriia</taxon>
        <taxon>Fusobacteriales</taxon>
        <taxon>Fusobacteriaceae</taxon>
        <taxon>Fusobacterium</taxon>
    </lineage>
</organism>
<proteinExistence type="inferred from homology"/>
<gene>
    <name evidence="1" type="primary">mraY</name>
    <name type="ordered locus">FN1459</name>
</gene>
<dbReference type="EC" id="2.7.8.13" evidence="1"/>
<dbReference type="EMBL" id="AE009951">
    <property type="protein sequence ID" value="AAL95652.1"/>
    <property type="molecule type" value="Genomic_DNA"/>
</dbReference>
<dbReference type="RefSeq" id="NP_604353.1">
    <property type="nucleotide sequence ID" value="NC_003454.1"/>
</dbReference>
<dbReference type="RefSeq" id="WP_005902299.1">
    <property type="nucleotide sequence ID" value="NZ_OZ209243.1"/>
</dbReference>
<dbReference type="SMR" id="Q8RDQ0"/>
<dbReference type="FunCoup" id="Q8RDQ0">
    <property type="interactions" value="370"/>
</dbReference>
<dbReference type="STRING" id="190304.FN1459"/>
<dbReference type="PaxDb" id="190304-FN1459"/>
<dbReference type="EnsemblBacteria" id="AAL95652">
    <property type="protein sequence ID" value="AAL95652"/>
    <property type="gene ID" value="FN1459"/>
</dbReference>
<dbReference type="GeneID" id="79784422"/>
<dbReference type="KEGG" id="fnu:FN1459"/>
<dbReference type="PATRIC" id="fig|190304.8.peg.2019"/>
<dbReference type="eggNOG" id="COG0472">
    <property type="taxonomic scope" value="Bacteria"/>
</dbReference>
<dbReference type="HOGENOM" id="CLU_023982_0_0_0"/>
<dbReference type="InParanoid" id="Q8RDQ0"/>
<dbReference type="BioCyc" id="FNUC190304:G1FZS-2028-MONOMER"/>
<dbReference type="UniPathway" id="UPA00219"/>
<dbReference type="Proteomes" id="UP000002521">
    <property type="component" value="Chromosome"/>
</dbReference>
<dbReference type="GO" id="GO:0005886">
    <property type="term" value="C:plasma membrane"/>
    <property type="evidence" value="ECO:0000318"/>
    <property type="project" value="GO_Central"/>
</dbReference>
<dbReference type="GO" id="GO:0046872">
    <property type="term" value="F:metal ion binding"/>
    <property type="evidence" value="ECO:0007669"/>
    <property type="project" value="UniProtKB-KW"/>
</dbReference>
<dbReference type="GO" id="GO:0008963">
    <property type="term" value="F:phospho-N-acetylmuramoyl-pentapeptide-transferase activity"/>
    <property type="evidence" value="ECO:0007669"/>
    <property type="project" value="UniProtKB-UniRule"/>
</dbReference>
<dbReference type="GO" id="GO:0016780">
    <property type="term" value="F:phosphotransferase activity, for other substituted phosphate groups"/>
    <property type="evidence" value="ECO:0000318"/>
    <property type="project" value="GO_Central"/>
</dbReference>
<dbReference type="GO" id="GO:0051992">
    <property type="term" value="F:UDP-N-acetylmuramoyl-L-alanyl-D-glutamyl-meso-2,6-diaminopimelyl-D-alanyl-D-alanine:undecaprenyl-phosphate transferase activity"/>
    <property type="evidence" value="ECO:0007669"/>
    <property type="project" value="RHEA"/>
</dbReference>
<dbReference type="GO" id="GO:0051301">
    <property type="term" value="P:cell division"/>
    <property type="evidence" value="ECO:0007669"/>
    <property type="project" value="UniProtKB-KW"/>
</dbReference>
<dbReference type="GO" id="GO:0044038">
    <property type="term" value="P:cell wall macromolecule biosynthetic process"/>
    <property type="evidence" value="ECO:0000318"/>
    <property type="project" value="GO_Central"/>
</dbReference>
<dbReference type="GO" id="GO:0071555">
    <property type="term" value="P:cell wall organization"/>
    <property type="evidence" value="ECO:0000318"/>
    <property type="project" value="GO_Central"/>
</dbReference>
<dbReference type="GO" id="GO:0009252">
    <property type="term" value="P:peptidoglycan biosynthetic process"/>
    <property type="evidence" value="ECO:0007669"/>
    <property type="project" value="UniProtKB-UniRule"/>
</dbReference>
<dbReference type="GO" id="GO:0008360">
    <property type="term" value="P:regulation of cell shape"/>
    <property type="evidence" value="ECO:0007669"/>
    <property type="project" value="UniProtKB-KW"/>
</dbReference>
<dbReference type="CDD" id="cd06852">
    <property type="entry name" value="GT_MraY"/>
    <property type="match status" value="1"/>
</dbReference>
<dbReference type="HAMAP" id="MF_00038">
    <property type="entry name" value="MraY"/>
    <property type="match status" value="1"/>
</dbReference>
<dbReference type="InterPro" id="IPR000715">
    <property type="entry name" value="Glycosyl_transferase_4"/>
</dbReference>
<dbReference type="InterPro" id="IPR003524">
    <property type="entry name" value="PNAcMuramoyl-5peptid_Trfase"/>
</dbReference>
<dbReference type="InterPro" id="IPR018480">
    <property type="entry name" value="PNAcMuramoyl-5peptid_Trfase_CS"/>
</dbReference>
<dbReference type="NCBIfam" id="TIGR00445">
    <property type="entry name" value="mraY"/>
    <property type="match status" value="1"/>
</dbReference>
<dbReference type="PANTHER" id="PTHR22926">
    <property type="entry name" value="PHOSPHO-N-ACETYLMURAMOYL-PENTAPEPTIDE-TRANSFERASE"/>
    <property type="match status" value="1"/>
</dbReference>
<dbReference type="PANTHER" id="PTHR22926:SF5">
    <property type="entry name" value="PHOSPHO-N-ACETYLMURAMOYL-PENTAPEPTIDE-TRANSFERASE HOMOLOG"/>
    <property type="match status" value="1"/>
</dbReference>
<dbReference type="Pfam" id="PF00953">
    <property type="entry name" value="Glycos_transf_4"/>
    <property type="match status" value="1"/>
</dbReference>
<dbReference type="Pfam" id="PF10555">
    <property type="entry name" value="MraY_sig1"/>
    <property type="match status" value="1"/>
</dbReference>
<dbReference type="PROSITE" id="PS01347">
    <property type="entry name" value="MRAY_1"/>
    <property type="match status" value="1"/>
</dbReference>
<dbReference type="PROSITE" id="PS01348">
    <property type="entry name" value="MRAY_2"/>
    <property type="match status" value="1"/>
</dbReference>
<accession>Q8RDQ0</accession>
<feature type="chain" id="PRO_0000108827" description="Phospho-N-acetylmuramoyl-pentapeptide-transferase">
    <location>
        <begin position="1"/>
        <end position="361"/>
    </location>
</feature>
<feature type="transmembrane region" description="Helical" evidence="1">
    <location>
        <begin position="17"/>
        <end position="37"/>
    </location>
</feature>
<feature type="transmembrane region" description="Helical" evidence="1">
    <location>
        <begin position="66"/>
        <end position="86"/>
    </location>
</feature>
<feature type="transmembrane region" description="Helical" evidence="1">
    <location>
        <begin position="90"/>
        <end position="110"/>
    </location>
</feature>
<feature type="transmembrane region" description="Helical" evidence="1">
    <location>
        <begin position="129"/>
        <end position="149"/>
    </location>
</feature>
<feature type="transmembrane region" description="Helical" evidence="1">
    <location>
        <begin position="162"/>
        <end position="182"/>
    </location>
</feature>
<feature type="transmembrane region" description="Helical" evidence="1">
    <location>
        <begin position="197"/>
        <end position="217"/>
    </location>
</feature>
<feature type="transmembrane region" description="Helical" evidence="1">
    <location>
        <begin position="232"/>
        <end position="252"/>
    </location>
</feature>
<feature type="transmembrane region" description="Helical" evidence="1">
    <location>
        <begin position="261"/>
        <end position="281"/>
    </location>
</feature>
<feature type="transmembrane region" description="Helical" evidence="1">
    <location>
        <begin position="286"/>
        <end position="306"/>
    </location>
</feature>
<feature type="transmembrane region" description="Helical" evidence="1">
    <location>
        <begin position="340"/>
        <end position="360"/>
    </location>
</feature>